<protein>
    <recommendedName>
        <fullName>Uncharacterized protein ycf15</fullName>
    </recommendedName>
    <alternativeName>
        <fullName>ORF77</fullName>
    </alternativeName>
</protein>
<dbReference type="EMBL" id="AP000423">
    <property type="protein sequence ID" value="BAA84429.1"/>
    <property type="molecule type" value="Genomic_DNA"/>
</dbReference>
<dbReference type="EMBL" id="AP000423">
    <property type="protein sequence ID" value="BAA84448.1"/>
    <property type="molecule type" value="Genomic_DNA"/>
</dbReference>
<dbReference type="STRING" id="3702.P56809"/>
<dbReference type="PaxDb" id="3702-ATCG00870.1"/>
<dbReference type="EnsemblPlants" id="ATCG00870.1">
    <property type="protein sequence ID" value="ATCG00870.1"/>
    <property type="gene ID" value="ATCG00870"/>
</dbReference>
<dbReference type="EnsemblPlants" id="ATCG01270.1">
    <property type="protein sequence ID" value="ATCG01270.1"/>
    <property type="gene ID" value="ATCG01270"/>
</dbReference>
<dbReference type="Gramene" id="ATCG00870.1">
    <property type="protein sequence ID" value="ATCG00870.1"/>
    <property type="gene ID" value="ATCG00870"/>
</dbReference>
<dbReference type="Gramene" id="ATCG01270.1">
    <property type="protein sequence ID" value="ATCG01270.1"/>
    <property type="gene ID" value="ATCG01270"/>
</dbReference>
<dbReference type="Araport" id="ATCG00870"/>
<dbReference type="Araport" id="ATCG01270"/>
<dbReference type="TAIR" id="ATCG00870">
    <property type="gene designation" value="ORF77.1"/>
</dbReference>
<dbReference type="TAIR" id="ATCG01270">
    <property type="gene designation" value="ORF77.2"/>
</dbReference>
<dbReference type="HOGENOM" id="CLU_2729683_0_0_1"/>
<dbReference type="InParanoid" id="P56809"/>
<dbReference type="OMA" id="PWNNMLL"/>
<dbReference type="Proteomes" id="UP000006548">
    <property type="component" value="Chloroplast Pltd"/>
</dbReference>
<dbReference type="GO" id="GO:0009507">
    <property type="term" value="C:chloroplast"/>
    <property type="evidence" value="ECO:0000304"/>
    <property type="project" value="TAIR"/>
</dbReference>
<dbReference type="InterPro" id="IPR019645">
    <property type="entry name" value="Uncharacterised_Ycf15"/>
</dbReference>
<dbReference type="Pfam" id="PF10705">
    <property type="entry name" value="Ycf15"/>
    <property type="match status" value="1"/>
</dbReference>
<gene>
    <name type="primary">ycf15-A</name>
    <name type="synonym">ycf15-1</name>
    <name type="ordered locus">AtCg00870</name>
</gene>
<gene>
    <name type="primary">ycf15-B</name>
    <name type="synonym">ycf15-2</name>
    <name type="ordered locus">AtCg01270</name>
</gene>
<name>YCF15_ARATH</name>
<comment type="subcellular location">
    <subcellularLocation>
        <location>Plastid</location>
        <location>Chloroplast</location>
    </subcellularLocation>
</comment>
<comment type="similarity">
    <text evidence="1">Belongs to the ycf15 family.</text>
</comment>
<comment type="caution">
    <text evidence="2">Was originally thought to be a pseudogene before the proof of transcription of the gene.</text>
</comment>
<reference key="1">
    <citation type="journal article" date="1999" name="DNA Res.">
        <title>Complete structure of the chloroplast genome of Arabidopsis thaliana.</title>
        <authorList>
            <person name="Sato S."/>
            <person name="Nakamura Y."/>
            <person name="Kaneko T."/>
            <person name="Asamizu E."/>
            <person name="Tabata S."/>
        </authorList>
    </citation>
    <scope>NUCLEOTIDE SEQUENCE [LARGE SCALE GENOMIC DNA]</scope>
    <source>
        <strain>cv. Columbia</strain>
    </source>
</reference>
<reference key="2">
    <citation type="journal article" date="2001" name="Plant Mol. Biol.">
        <title>The plastid chromosome of spinach (Spinacia oleracea): complete nucleotide sequence and gene organization.</title>
        <authorList>
            <person name="Schmitz-Linneweber C."/>
            <person name="Maier R.M."/>
            <person name="Alcaraz J.-P."/>
            <person name="Cottet A."/>
            <person name="Herrmann R.G."/>
            <person name="Mache R."/>
        </authorList>
    </citation>
    <scope>ABSENCE OF TRANSCRIPTION</scope>
    <scope>SUGGESTION THAT IT IS A PSEUDOGENE</scope>
</reference>
<evidence type="ECO:0000305" key="1"/>
<evidence type="ECO:0000305" key="2">
    <source>
    </source>
</evidence>
<proteinExistence type="evidence at transcript level"/>
<geneLocation type="chloroplast"/>
<accession>P56809</accession>
<organism>
    <name type="scientific">Arabidopsis thaliana</name>
    <name type="common">Mouse-ear cress</name>
    <dbReference type="NCBI Taxonomy" id="3702"/>
    <lineage>
        <taxon>Eukaryota</taxon>
        <taxon>Viridiplantae</taxon>
        <taxon>Streptophyta</taxon>
        <taxon>Embryophyta</taxon>
        <taxon>Tracheophyta</taxon>
        <taxon>Spermatophyta</taxon>
        <taxon>Magnoliopsida</taxon>
        <taxon>eudicotyledons</taxon>
        <taxon>Gunneridae</taxon>
        <taxon>Pentapetalae</taxon>
        <taxon>rosids</taxon>
        <taxon>malvids</taxon>
        <taxon>Brassicales</taxon>
        <taxon>Brassicaceae</taxon>
        <taxon>Camelineae</taxon>
        <taxon>Arabidopsis</taxon>
    </lineage>
</organism>
<feature type="chain" id="PRO_0000217308" description="Uncharacterized protein ycf15">
    <location>
        <begin position="1"/>
        <end position="77"/>
    </location>
</feature>
<keyword id="KW-0150">Chloroplast</keyword>
<keyword id="KW-0934">Plastid</keyword>
<keyword id="KW-1185">Reference proteome</keyword>
<sequence length="77" mass="9014">MLLLKHGRIEILDQNTMYGWYELPKQEFLNSEQPELLLTTSKKFPLIKDGNPLENQKYACRIKLLLLSVPITNQLNN</sequence>